<accession>A8FVN5</accession>
<sequence length="230" mass="24970">MSERAPVVTIDGPSGAGKGTISQLLAERLGWKLLDSGAIYRVLALAAIHHNVELDNEDSLSLLAAHLDVQFITGNGLHGIKVVLEGEDVSIDIRSQECSNAASKVAAYPRVREALLRRQRAFNEAPGLIADGRDMGTVVFPNTPAKIYLTASAEERAQRRYNQLQDKGFDVNIDRLLSEIIERDDRDTNRSVAPLVPAEDALIIDTSGIGIDEVLDIALTHIQTKLPSVS</sequence>
<dbReference type="EC" id="2.7.4.25" evidence="1"/>
<dbReference type="EMBL" id="CP000821">
    <property type="protein sequence ID" value="ABV36908.1"/>
    <property type="molecule type" value="Genomic_DNA"/>
</dbReference>
<dbReference type="RefSeq" id="WP_012142643.1">
    <property type="nucleotide sequence ID" value="NC_009831.1"/>
</dbReference>
<dbReference type="SMR" id="A8FVN5"/>
<dbReference type="STRING" id="425104.Ssed_2299"/>
<dbReference type="KEGG" id="sse:Ssed_2299"/>
<dbReference type="eggNOG" id="COG0283">
    <property type="taxonomic scope" value="Bacteria"/>
</dbReference>
<dbReference type="HOGENOM" id="CLU_079959_2_0_6"/>
<dbReference type="OrthoDB" id="9807434at2"/>
<dbReference type="Proteomes" id="UP000002015">
    <property type="component" value="Chromosome"/>
</dbReference>
<dbReference type="GO" id="GO:0005829">
    <property type="term" value="C:cytosol"/>
    <property type="evidence" value="ECO:0007669"/>
    <property type="project" value="TreeGrafter"/>
</dbReference>
<dbReference type="GO" id="GO:0005524">
    <property type="term" value="F:ATP binding"/>
    <property type="evidence" value="ECO:0007669"/>
    <property type="project" value="UniProtKB-UniRule"/>
</dbReference>
<dbReference type="GO" id="GO:0036430">
    <property type="term" value="F:CMP kinase activity"/>
    <property type="evidence" value="ECO:0007669"/>
    <property type="project" value="RHEA"/>
</dbReference>
<dbReference type="GO" id="GO:0036431">
    <property type="term" value="F:dCMP kinase activity"/>
    <property type="evidence" value="ECO:0007669"/>
    <property type="project" value="RHEA"/>
</dbReference>
<dbReference type="GO" id="GO:0015949">
    <property type="term" value="P:nucleobase-containing small molecule interconversion"/>
    <property type="evidence" value="ECO:0007669"/>
    <property type="project" value="TreeGrafter"/>
</dbReference>
<dbReference type="GO" id="GO:0006220">
    <property type="term" value="P:pyrimidine nucleotide metabolic process"/>
    <property type="evidence" value="ECO:0007669"/>
    <property type="project" value="UniProtKB-UniRule"/>
</dbReference>
<dbReference type="CDD" id="cd02020">
    <property type="entry name" value="CMPK"/>
    <property type="match status" value="1"/>
</dbReference>
<dbReference type="FunFam" id="3.40.50.300:FF:000262">
    <property type="entry name" value="Cytidylate kinase"/>
    <property type="match status" value="1"/>
</dbReference>
<dbReference type="Gene3D" id="3.40.50.300">
    <property type="entry name" value="P-loop containing nucleotide triphosphate hydrolases"/>
    <property type="match status" value="1"/>
</dbReference>
<dbReference type="HAMAP" id="MF_00238">
    <property type="entry name" value="Cytidyl_kinase_type1"/>
    <property type="match status" value="1"/>
</dbReference>
<dbReference type="InterPro" id="IPR003136">
    <property type="entry name" value="Cytidylate_kin"/>
</dbReference>
<dbReference type="InterPro" id="IPR011994">
    <property type="entry name" value="Cytidylate_kinase_dom"/>
</dbReference>
<dbReference type="InterPro" id="IPR027417">
    <property type="entry name" value="P-loop_NTPase"/>
</dbReference>
<dbReference type="NCBIfam" id="TIGR00017">
    <property type="entry name" value="cmk"/>
    <property type="match status" value="1"/>
</dbReference>
<dbReference type="PANTHER" id="PTHR21299:SF2">
    <property type="entry name" value="CYTIDYLATE KINASE"/>
    <property type="match status" value="1"/>
</dbReference>
<dbReference type="PANTHER" id="PTHR21299">
    <property type="entry name" value="CYTIDYLATE KINASE/PANTOATE-BETA-ALANINE LIGASE"/>
    <property type="match status" value="1"/>
</dbReference>
<dbReference type="Pfam" id="PF02224">
    <property type="entry name" value="Cytidylate_kin"/>
    <property type="match status" value="1"/>
</dbReference>
<dbReference type="SUPFAM" id="SSF52540">
    <property type="entry name" value="P-loop containing nucleoside triphosphate hydrolases"/>
    <property type="match status" value="1"/>
</dbReference>
<evidence type="ECO:0000255" key="1">
    <source>
        <dbReference type="HAMAP-Rule" id="MF_00238"/>
    </source>
</evidence>
<proteinExistence type="inferred from homology"/>
<organism>
    <name type="scientific">Shewanella sediminis (strain HAW-EB3)</name>
    <dbReference type="NCBI Taxonomy" id="425104"/>
    <lineage>
        <taxon>Bacteria</taxon>
        <taxon>Pseudomonadati</taxon>
        <taxon>Pseudomonadota</taxon>
        <taxon>Gammaproteobacteria</taxon>
        <taxon>Alteromonadales</taxon>
        <taxon>Shewanellaceae</taxon>
        <taxon>Shewanella</taxon>
    </lineage>
</organism>
<name>KCY_SHESH</name>
<keyword id="KW-0067">ATP-binding</keyword>
<keyword id="KW-0963">Cytoplasm</keyword>
<keyword id="KW-0418">Kinase</keyword>
<keyword id="KW-0547">Nucleotide-binding</keyword>
<keyword id="KW-1185">Reference proteome</keyword>
<keyword id="KW-0808">Transferase</keyword>
<comment type="catalytic activity">
    <reaction evidence="1">
        <text>CMP + ATP = CDP + ADP</text>
        <dbReference type="Rhea" id="RHEA:11600"/>
        <dbReference type="ChEBI" id="CHEBI:30616"/>
        <dbReference type="ChEBI" id="CHEBI:58069"/>
        <dbReference type="ChEBI" id="CHEBI:60377"/>
        <dbReference type="ChEBI" id="CHEBI:456216"/>
        <dbReference type="EC" id="2.7.4.25"/>
    </reaction>
</comment>
<comment type="catalytic activity">
    <reaction evidence="1">
        <text>dCMP + ATP = dCDP + ADP</text>
        <dbReference type="Rhea" id="RHEA:25094"/>
        <dbReference type="ChEBI" id="CHEBI:30616"/>
        <dbReference type="ChEBI" id="CHEBI:57566"/>
        <dbReference type="ChEBI" id="CHEBI:58593"/>
        <dbReference type="ChEBI" id="CHEBI:456216"/>
        <dbReference type="EC" id="2.7.4.25"/>
    </reaction>
</comment>
<comment type="subcellular location">
    <subcellularLocation>
        <location evidence="1">Cytoplasm</location>
    </subcellularLocation>
</comment>
<comment type="similarity">
    <text evidence="1">Belongs to the cytidylate kinase family. Type 1 subfamily.</text>
</comment>
<feature type="chain" id="PRO_1000078352" description="Cytidylate kinase">
    <location>
        <begin position="1"/>
        <end position="230"/>
    </location>
</feature>
<feature type="binding site" evidence="1">
    <location>
        <begin position="12"/>
        <end position="20"/>
    </location>
    <ligand>
        <name>ATP</name>
        <dbReference type="ChEBI" id="CHEBI:30616"/>
    </ligand>
</feature>
<protein>
    <recommendedName>
        <fullName evidence="1">Cytidylate kinase</fullName>
        <shortName evidence="1">CK</shortName>
        <ecNumber evidence="1">2.7.4.25</ecNumber>
    </recommendedName>
    <alternativeName>
        <fullName evidence="1">Cytidine monophosphate kinase</fullName>
        <shortName evidence="1">CMP kinase</shortName>
    </alternativeName>
</protein>
<reference key="1">
    <citation type="submission" date="2007-08" db="EMBL/GenBank/DDBJ databases">
        <title>Complete sequence of Shewanella sediminis HAW-EB3.</title>
        <authorList>
            <consortium name="US DOE Joint Genome Institute"/>
            <person name="Copeland A."/>
            <person name="Lucas S."/>
            <person name="Lapidus A."/>
            <person name="Barry K."/>
            <person name="Glavina del Rio T."/>
            <person name="Dalin E."/>
            <person name="Tice H."/>
            <person name="Pitluck S."/>
            <person name="Chertkov O."/>
            <person name="Brettin T."/>
            <person name="Bruce D."/>
            <person name="Detter J.C."/>
            <person name="Han C."/>
            <person name="Schmutz J."/>
            <person name="Larimer F."/>
            <person name="Land M."/>
            <person name="Hauser L."/>
            <person name="Kyrpides N."/>
            <person name="Kim E."/>
            <person name="Zhao J.-S."/>
            <person name="Richardson P."/>
        </authorList>
    </citation>
    <scope>NUCLEOTIDE SEQUENCE [LARGE SCALE GENOMIC DNA]</scope>
    <source>
        <strain>HAW-EB3</strain>
    </source>
</reference>
<gene>
    <name evidence="1" type="primary">cmk</name>
    <name type="ordered locus">Ssed_2299</name>
</gene>